<reference key="1">
    <citation type="journal article" date="2005" name="PLoS Biol.">
        <title>The genomes of Oryza sativa: a history of duplications.</title>
        <authorList>
            <person name="Yu J."/>
            <person name="Wang J."/>
            <person name="Lin W."/>
            <person name="Li S."/>
            <person name="Li H."/>
            <person name="Zhou J."/>
            <person name="Ni P."/>
            <person name="Dong W."/>
            <person name="Hu S."/>
            <person name="Zeng C."/>
            <person name="Zhang J."/>
            <person name="Zhang Y."/>
            <person name="Li R."/>
            <person name="Xu Z."/>
            <person name="Li S."/>
            <person name="Li X."/>
            <person name="Zheng H."/>
            <person name="Cong L."/>
            <person name="Lin L."/>
            <person name="Yin J."/>
            <person name="Geng J."/>
            <person name="Li G."/>
            <person name="Shi J."/>
            <person name="Liu J."/>
            <person name="Lv H."/>
            <person name="Li J."/>
            <person name="Wang J."/>
            <person name="Deng Y."/>
            <person name="Ran L."/>
            <person name="Shi X."/>
            <person name="Wang X."/>
            <person name="Wu Q."/>
            <person name="Li C."/>
            <person name="Ren X."/>
            <person name="Wang J."/>
            <person name="Wang X."/>
            <person name="Li D."/>
            <person name="Liu D."/>
            <person name="Zhang X."/>
            <person name="Ji Z."/>
            <person name="Zhao W."/>
            <person name="Sun Y."/>
            <person name="Zhang Z."/>
            <person name="Bao J."/>
            <person name="Han Y."/>
            <person name="Dong L."/>
            <person name="Ji J."/>
            <person name="Chen P."/>
            <person name="Wu S."/>
            <person name="Liu J."/>
            <person name="Xiao Y."/>
            <person name="Bu D."/>
            <person name="Tan J."/>
            <person name="Yang L."/>
            <person name="Ye C."/>
            <person name="Zhang J."/>
            <person name="Xu J."/>
            <person name="Zhou Y."/>
            <person name="Yu Y."/>
            <person name="Zhang B."/>
            <person name="Zhuang S."/>
            <person name="Wei H."/>
            <person name="Liu B."/>
            <person name="Lei M."/>
            <person name="Yu H."/>
            <person name="Li Y."/>
            <person name="Xu H."/>
            <person name="Wei S."/>
            <person name="He X."/>
            <person name="Fang L."/>
            <person name="Zhang Z."/>
            <person name="Zhang Y."/>
            <person name="Huang X."/>
            <person name="Su Z."/>
            <person name="Tong W."/>
            <person name="Li J."/>
            <person name="Tong Z."/>
            <person name="Li S."/>
            <person name="Ye J."/>
            <person name="Wang L."/>
            <person name="Fang L."/>
            <person name="Lei T."/>
            <person name="Chen C.-S."/>
            <person name="Chen H.-C."/>
            <person name="Xu Z."/>
            <person name="Li H."/>
            <person name="Huang H."/>
            <person name="Zhang F."/>
            <person name="Xu H."/>
            <person name="Li N."/>
            <person name="Zhao C."/>
            <person name="Li S."/>
            <person name="Dong L."/>
            <person name="Huang Y."/>
            <person name="Li L."/>
            <person name="Xi Y."/>
            <person name="Qi Q."/>
            <person name="Li W."/>
            <person name="Zhang B."/>
            <person name="Hu W."/>
            <person name="Zhang Y."/>
            <person name="Tian X."/>
            <person name="Jiao Y."/>
            <person name="Liang X."/>
            <person name="Jin J."/>
            <person name="Gao L."/>
            <person name="Zheng W."/>
            <person name="Hao B."/>
            <person name="Liu S.-M."/>
            <person name="Wang W."/>
            <person name="Yuan L."/>
            <person name="Cao M."/>
            <person name="McDermott J."/>
            <person name="Samudrala R."/>
            <person name="Wang J."/>
            <person name="Wong G.K.-S."/>
            <person name="Yang H."/>
        </authorList>
    </citation>
    <scope>NUCLEOTIDE SEQUENCE [LARGE SCALE GENOMIC DNA]</scope>
    <source>
        <strain>cv. 93-11</strain>
    </source>
</reference>
<reference key="2">
    <citation type="journal article" date="2002" name="Plant Physiol.">
        <title>Cellulose synthase-like genes of rice.</title>
        <authorList>
            <person name="Hazen S.P."/>
            <person name="Scott-Craig J.S."/>
            <person name="Walton J.D."/>
        </authorList>
    </citation>
    <scope>GENE FAMILY</scope>
    <scope>NOMENCLATURE</scope>
</reference>
<evidence type="ECO:0000255" key="1"/>
<evidence type="ECO:0000256" key="2">
    <source>
        <dbReference type="SAM" id="MobiDB-lite"/>
    </source>
</evidence>
<evidence type="ECO:0000305" key="3"/>
<gene>
    <name type="primary">CSLD1</name>
    <name type="ORF">OsI_34786</name>
</gene>
<name>CSLD1_ORYSI</name>
<sequence>MASKGILKNGGKPPTAPSSAAPTVVFGRRTDSGRFISYSRDDLDSEISSVDFQDYHVHIPMTPDNQPMDPAAGDEQQYVSSSLFTGGFNSVTRAHVMEKQASSARATVSACMVQGCGSKIMRNGRGADILPCECDFKICVDCFTDAVKGGGGVCPGCKEPYKHAEWEEVVSASNHDAINRALSLPHGHGHGPKMERRLSLVKQNGGAPGEFDHNRWLFETKGTYGYGNAIWPEDDGVAGHPKELMSKPWRPLTRKLRIQAAVISPYRLLVLIRLVALGLFLMWRIKHQNEDAIWLWGMSIVCELWFALSWVLDQLPKLCPINRATDLSVLKDKFETPTPSNPTGKSDLPGIDIFVSTADPEKEPVLVTANTILSILAADYPVDKLACYVSDDGGALLTFEAMAEAASFANLWVPFCRKHEIEPRNPDSYFNLKRDPFKNKVKGDFVKDRRRVKREYDEFKVRVNGLPDAIRRRSDAYHAREEIQAMNLQREKMKAGGDEQQLEPIKIPKATWMADGTHWPGTWLQASPEHARGDHAGIIQVMLKPPSPSPSSSGGDMEKRVDLSGVDTRLPMLVYVSREKRPGYDHNKKAGAMNALVRASAIMSNGPFILNLDCDHYVYNSKAFREGMCFMMDRGGDRLCYVQFPQRFEGIDPSDRYANHNTVFFDVNMRALDGLQGPVYVGTGCLFRRIALYGFDPPRSKDHTTPWSCCLPRRRRTRSQPQPQEEEEETMALRMDMDGAMNMASFPKKFGNSSFLIDSIPVAEFQGRPLADHPSVKNGRPPGALTIPRETLDASIVAEAISVVSCWYEEKTEWGTRVGWIYGSVTEDVVTGYRMHNRGWKSVYCVTHRDAFRGTAPINLTDRLHQVLRWATGSVEIFFSRNNALFASSKMKVLQRIAYLNVGIYPFTSVFLIVYCFLPALSLFSGQFIVQTLNVTFLTYLLIITITLCLLAMLEIKWSGIALEEWWRNEQFWLIGGTSAHLAAVLQGLLKVIAGIEISFTLTSKQLGDDVDDEFAELYAVKWTSLMIPPLTIIMINLVAIAVGFSRTIYSTIPQWSKLLGGVFFSFWVLAHLYPFAKGLMGRRGRTPTIVYVWSGLVAITISLLWIAIKPPSAQANSQLGGSFSFP</sequence>
<dbReference type="EC" id="2.4.1.-"/>
<dbReference type="EMBL" id="CM000135">
    <property type="protein sequence ID" value="EEC67503.1"/>
    <property type="molecule type" value="Genomic_DNA"/>
</dbReference>
<dbReference type="SMR" id="A2ZAK8"/>
<dbReference type="STRING" id="39946.A2ZAK8"/>
<dbReference type="EnsemblPlants" id="BGIOSGA033504-TA">
    <property type="protein sequence ID" value="BGIOSGA033504-PA"/>
    <property type="gene ID" value="BGIOSGA033504"/>
</dbReference>
<dbReference type="EnsemblPlants" id="OsGoSa_10g0021320.01">
    <property type="protein sequence ID" value="OsGoSa_10g0021320.01"/>
    <property type="gene ID" value="OsGoSa_10g0021320"/>
</dbReference>
<dbReference type="EnsemblPlants" id="OsIR64_10g0021020.01">
    <property type="protein sequence ID" value="OsIR64_10g0021020.01"/>
    <property type="gene ID" value="OsIR64_10g0021020"/>
</dbReference>
<dbReference type="EnsemblPlants" id="OsKYG_10g0020750.01">
    <property type="protein sequence ID" value="OsKYG_10g0020750.01"/>
    <property type="gene ID" value="OsKYG_10g0020750"/>
</dbReference>
<dbReference type="EnsemblPlants" id="OsLima_10g0020860.01">
    <property type="protein sequence ID" value="OsLima_10g0020860.01"/>
    <property type="gene ID" value="OsLima_10g0020860"/>
</dbReference>
<dbReference type="EnsemblPlants" id="OsMH63_10G021080_01">
    <property type="protein sequence ID" value="OsMH63_10G021080_01"/>
    <property type="gene ID" value="OsMH63_10G021080"/>
</dbReference>
<dbReference type="EnsemblPlants" id="OsPr106_10g0021290.01">
    <property type="protein sequence ID" value="OsPr106_10g0021290.01"/>
    <property type="gene ID" value="OsPr106_10g0021290"/>
</dbReference>
<dbReference type="EnsemblPlants" id="OsZS97_10G021060_01">
    <property type="protein sequence ID" value="OsZS97_10G021060_01"/>
    <property type="gene ID" value="OsZS97_10G021060"/>
</dbReference>
<dbReference type="Gramene" id="BGIOSGA033504-TA">
    <property type="protein sequence ID" value="BGIOSGA033504-PA"/>
    <property type="gene ID" value="BGIOSGA033504"/>
</dbReference>
<dbReference type="Gramene" id="OsGoSa_10g0021320.01">
    <property type="protein sequence ID" value="OsGoSa_10g0021320.01"/>
    <property type="gene ID" value="OsGoSa_10g0021320"/>
</dbReference>
<dbReference type="Gramene" id="OsIR64_10g0021020.01">
    <property type="protein sequence ID" value="OsIR64_10g0021020.01"/>
    <property type="gene ID" value="OsIR64_10g0021020"/>
</dbReference>
<dbReference type="Gramene" id="OsKYG_10g0020750.01">
    <property type="protein sequence ID" value="OsKYG_10g0020750.01"/>
    <property type="gene ID" value="OsKYG_10g0020750"/>
</dbReference>
<dbReference type="Gramene" id="OsLima_10g0020860.01">
    <property type="protein sequence ID" value="OsLima_10g0020860.01"/>
    <property type="gene ID" value="OsLima_10g0020860"/>
</dbReference>
<dbReference type="Gramene" id="OsMH63_10G021080_01">
    <property type="protein sequence ID" value="OsMH63_10G021080_01"/>
    <property type="gene ID" value="OsMH63_10G021080"/>
</dbReference>
<dbReference type="Gramene" id="OsPr106_10g0021290.01">
    <property type="protein sequence ID" value="OsPr106_10g0021290.01"/>
    <property type="gene ID" value="OsPr106_10g0021290"/>
</dbReference>
<dbReference type="Gramene" id="OsZS97_10G021060_01">
    <property type="protein sequence ID" value="OsZS97_10G021060_01"/>
    <property type="gene ID" value="OsZS97_10G021060"/>
</dbReference>
<dbReference type="HOGENOM" id="CLU_001418_0_2_1"/>
<dbReference type="OMA" id="TWIHPSQ"/>
<dbReference type="OrthoDB" id="72851at2759"/>
<dbReference type="Proteomes" id="UP000007015">
    <property type="component" value="Chromosome 10"/>
</dbReference>
<dbReference type="GO" id="GO:0000139">
    <property type="term" value="C:Golgi membrane"/>
    <property type="evidence" value="ECO:0007669"/>
    <property type="project" value="UniProtKB-SubCell"/>
</dbReference>
<dbReference type="GO" id="GO:0016760">
    <property type="term" value="F:cellulose synthase (UDP-forming) activity"/>
    <property type="evidence" value="ECO:0007669"/>
    <property type="project" value="InterPro"/>
</dbReference>
<dbReference type="GO" id="GO:0071555">
    <property type="term" value="P:cell wall organization"/>
    <property type="evidence" value="ECO:0007669"/>
    <property type="project" value="UniProtKB-KW"/>
</dbReference>
<dbReference type="GO" id="GO:0030244">
    <property type="term" value="P:cellulose biosynthetic process"/>
    <property type="evidence" value="ECO:0007669"/>
    <property type="project" value="InterPro"/>
</dbReference>
<dbReference type="GO" id="GO:0071669">
    <property type="term" value="P:plant-type cell wall organization or biogenesis"/>
    <property type="evidence" value="ECO:0007669"/>
    <property type="project" value="UniProtKB-ARBA"/>
</dbReference>
<dbReference type="FunFam" id="3.30.40.10:FF:000229">
    <property type="entry name" value="Cellulose synthase-like protein D3"/>
    <property type="match status" value="1"/>
</dbReference>
<dbReference type="FunFam" id="3.90.550.10:FF:000040">
    <property type="entry name" value="cellulose synthase-like protein D3"/>
    <property type="match status" value="1"/>
</dbReference>
<dbReference type="Gene3D" id="3.90.550.10">
    <property type="entry name" value="Spore Coat Polysaccharide Biosynthesis Protein SpsA, Chain A"/>
    <property type="match status" value="1"/>
</dbReference>
<dbReference type="Gene3D" id="3.30.40.10">
    <property type="entry name" value="Zinc/RING finger domain, C3HC4 (zinc finger)"/>
    <property type="match status" value="1"/>
</dbReference>
<dbReference type="InterPro" id="IPR005150">
    <property type="entry name" value="Cellulose_synth"/>
</dbReference>
<dbReference type="InterPro" id="IPR029044">
    <property type="entry name" value="Nucleotide-diphossugar_trans"/>
</dbReference>
<dbReference type="InterPro" id="IPR013083">
    <property type="entry name" value="Znf_RING/FYVE/PHD"/>
</dbReference>
<dbReference type="PANTHER" id="PTHR13301">
    <property type="entry name" value="X-BOX TRANSCRIPTION FACTOR-RELATED"/>
    <property type="match status" value="1"/>
</dbReference>
<dbReference type="Pfam" id="PF03552">
    <property type="entry name" value="Cellulose_synt"/>
    <property type="match status" value="1"/>
</dbReference>
<dbReference type="Pfam" id="PF14570">
    <property type="entry name" value="zf-RING_4"/>
    <property type="match status" value="1"/>
</dbReference>
<dbReference type="SUPFAM" id="SSF57850">
    <property type="entry name" value="RING/U-box"/>
    <property type="match status" value="1"/>
</dbReference>
<proteinExistence type="inferred from homology"/>
<keyword id="KW-0961">Cell wall biogenesis/degradation</keyword>
<keyword id="KW-0328">Glycosyltransferase</keyword>
<keyword id="KW-0333">Golgi apparatus</keyword>
<keyword id="KW-0472">Membrane</keyword>
<keyword id="KW-1185">Reference proteome</keyword>
<keyword id="KW-0808">Transferase</keyword>
<keyword id="KW-0812">Transmembrane</keyword>
<keyword id="KW-1133">Transmembrane helix</keyword>
<comment type="function">
    <text>Thought to be a Golgi-localized beta-glycan synthase that polymerize the backbones of noncellulosic polysaccharides (hemicelluloses) of plant cell wall.</text>
</comment>
<comment type="subcellular location">
    <subcellularLocation>
        <location evidence="3">Golgi apparatus membrane</location>
        <topology evidence="3">Multi-pass membrane protein</topology>
    </subcellularLocation>
</comment>
<comment type="similarity">
    <text evidence="3">Belongs to the glycosyltransferase 2 family. Plant cellulose synthase-like D subfamily.</text>
</comment>
<organism>
    <name type="scientific">Oryza sativa subsp. indica</name>
    <name type="common">Rice</name>
    <dbReference type="NCBI Taxonomy" id="39946"/>
    <lineage>
        <taxon>Eukaryota</taxon>
        <taxon>Viridiplantae</taxon>
        <taxon>Streptophyta</taxon>
        <taxon>Embryophyta</taxon>
        <taxon>Tracheophyta</taxon>
        <taxon>Spermatophyta</taxon>
        <taxon>Magnoliopsida</taxon>
        <taxon>Liliopsida</taxon>
        <taxon>Poales</taxon>
        <taxon>Poaceae</taxon>
        <taxon>BOP clade</taxon>
        <taxon>Oryzoideae</taxon>
        <taxon>Oryzeae</taxon>
        <taxon>Oryzinae</taxon>
        <taxon>Oryza</taxon>
        <taxon>Oryza sativa</taxon>
    </lineage>
</organism>
<protein>
    <recommendedName>
        <fullName>Cellulose synthase-like protein D1</fullName>
        <ecNumber>2.4.1.-</ecNumber>
    </recommendedName>
    <alternativeName>
        <fullName>OsCslD1</fullName>
    </alternativeName>
</protein>
<accession>A2ZAK8</accession>
<accession>B8BIF0</accession>
<feature type="chain" id="PRO_0000319390" description="Cellulose synthase-like protein D1">
    <location>
        <begin position="1"/>
        <end position="1127"/>
    </location>
</feature>
<feature type="transmembrane region" description="Helical" evidence="1">
    <location>
        <begin position="262"/>
        <end position="282"/>
    </location>
</feature>
<feature type="transmembrane region" description="Helical" evidence="1">
    <location>
        <begin position="292"/>
        <end position="312"/>
    </location>
</feature>
<feature type="transmembrane region" description="Helical" evidence="1">
    <location>
        <begin position="910"/>
        <end position="930"/>
    </location>
</feature>
<feature type="transmembrane region" description="Helical" evidence="1">
    <location>
        <begin position="936"/>
        <end position="956"/>
    </location>
</feature>
<feature type="transmembrane region" description="Helical" evidence="1">
    <location>
        <begin position="982"/>
        <end position="1002"/>
    </location>
</feature>
<feature type="transmembrane region" description="Helical" evidence="1">
    <location>
        <begin position="1025"/>
        <end position="1045"/>
    </location>
</feature>
<feature type="transmembrane region" description="Helical" evidence="1">
    <location>
        <begin position="1059"/>
        <end position="1079"/>
    </location>
</feature>
<feature type="transmembrane region" description="Helical" evidence="1">
    <location>
        <begin position="1089"/>
        <end position="1109"/>
    </location>
</feature>
<feature type="region of interest" description="Disordered" evidence="2">
    <location>
        <begin position="1"/>
        <end position="24"/>
    </location>
</feature>
<feature type="active site" evidence="1">
    <location>
        <position position="392"/>
    </location>
</feature>
<feature type="active site" evidence="1">
    <location>
        <position position="828"/>
    </location>
</feature>